<organism>
    <name type="scientific">Clavibacter sepedonicus</name>
    <name type="common">Clavibacter michiganensis subsp. sepedonicus</name>
    <dbReference type="NCBI Taxonomy" id="31964"/>
    <lineage>
        <taxon>Bacteria</taxon>
        <taxon>Bacillati</taxon>
        <taxon>Actinomycetota</taxon>
        <taxon>Actinomycetes</taxon>
        <taxon>Micrococcales</taxon>
        <taxon>Microbacteriaceae</taxon>
        <taxon>Clavibacter</taxon>
    </lineage>
</organism>
<evidence type="ECO:0000255" key="1">
    <source>
        <dbReference type="HAMAP-Rule" id="MF_00014"/>
    </source>
</evidence>
<evidence type="ECO:0000256" key="2">
    <source>
        <dbReference type="SAM" id="MobiDB-lite"/>
    </source>
</evidence>
<reference key="1">
    <citation type="journal article" date="2008" name="J. Bacteriol.">
        <title>Genome of the actinomycete plant pathogen Clavibacter michiganensis subsp. sepedonicus suggests recent niche adaptation.</title>
        <authorList>
            <person name="Bentley S.D."/>
            <person name="Corton C."/>
            <person name="Brown S.E."/>
            <person name="Barron A."/>
            <person name="Clark L."/>
            <person name="Doggett J."/>
            <person name="Harris B."/>
            <person name="Ormond D."/>
            <person name="Quail M.A."/>
            <person name="May G."/>
            <person name="Francis D."/>
            <person name="Knudson D."/>
            <person name="Parkhill J."/>
            <person name="Ishimaru C.A."/>
        </authorList>
    </citation>
    <scope>NUCLEOTIDE SEQUENCE [LARGE SCALE GENOMIC DNA]</scope>
    <source>
        <strain>ATCC 33113 / DSM 20744 / JCM 9667 / LMG 2889 / ICMP 2535 / C-1</strain>
    </source>
</reference>
<feature type="chain" id="PRO_0000351748" description="Ribosome maturation factor RimM">
    <location>
        <begin position="1"/>
        <end position="211"/>
    </location>
</feature>
<feature type="domain" description="PRC barrel" evidence="1">
    <location>
        <begin position="111"/>
        <end position="182"/>
    </location>
</feature>
<feature type="region of interest" description="Disordered" evidence="2">
    <location>
        <begin position="184"/>
        <end position="211"/>
    </location>
</feature>
<gene>
    <name evidence="1" type="primary">rimM</name>
    <name type="ordered locus">CMS0757</name>
</gene>
<protein>
    <recommendedName>
        <fullName evidence="1">Ribosome maturation factor RimM</fullName>
    </recommendedName>
</protein>
<accession>B0REN0</accession>
<sequence length="211" mass="22934">MWWTPIPEDIVRDPAAFRVGRLTKAHGLKGAVKLELFTDDPDKRFVPGAEFSLQVPDSSPWHGRTLTLTELRWYNSHPVGFFEGVADRTAAESLAKAILWMTPPADEPAEPDAWYDHQLVGLKVLRDGVEVGTVSLVDHFPAQDLLHVDTPSGTVLVPFVQAIVPSVDVEAGTLVITPPLGLFEEIPDEQPTPSATSDAEPGSAPEGDDAR</sequence>
<keyword id="KW-0143">Chaperone</keyword>
<keyword id="KW-0963">Cytoplasm</keyword>
<keyword id="KW-0690">Ribosome biogenesis</keyword>
<keyword id="KW-0698">rRNA processing</keyword>
<comment type="function">
    <text evidence="1">An accessory protein needed during the final step in the assembly of 30S ribosomal subunit, possibly for assembly of the head region. Essential for efficient processing of 16S rRNA. May be needed both before and after RbfA during the maturation of 16S rRNA. It has affinity for free ribosomal 30S subunits but not for 70S ribosomes.</text>
</comment>
<comment type="subunit">
    <text evidence="1">Binds ribosomal protein uS19.</text>
</comment>
<comment type="subcellular location">
    <subcellularLocation>
        <location evidence="1">Cytoplasm</location>
    </subcellularLocation>
</comment>
<comment type="domain">
    <text evidence="1">The PRC barrel domain binds ribosomal protein uS19.</text>
</comment>
<comment type="similarity">
    <text evidence="1">Belongs to the RimM family.</text>
</comment>
<name>RIMM_CLASE</name>
<proteinExistence type="inferred from homology"/>
<dbReference type="EMBL" id="AM849034">
    <property type="protein sequence ID" value="CAQ00877.1"/>
    <property type="molecule type" value="Genomic_DNA"/>
</dbReference>
<dbReference type="RefSeq" id="WP_012298185.1">
    <property type="nucleotide sequence ID" value="NZ_MZMN01000003.1"/>
</dbReference>
<dbReference type="SMR" id="B0REN0"/>
<dbReference type="STRING" id="31964.CMS0757"/>
<dbReference type="KEGG" id="cms:CMS0757"/>
<dbReference type="eggNOG" id="COG0806">
    <property type="taxonomic scope" value="Bacteria"/>
</dbReference>
<dbReference type="HOGENOM" id="CLU_077636_0_0_11"/>
<dbReference type="OrthoDB" id="5381335at2"/>
<dbReference type="Proteomes" id="UP000001318">
    <property type="component" value="Chromosome"/>
</dbReference>
<dbReference type="GO" id="GO:0005737">
    <property type="term" value="C:cytoplasm"/>
    <property type="evidence" value="ECO:0007669"/>
    <property type="project" value="UniProtKB-SubCell"/>
</dbReference>
<dbReference type="GO" id="GO:0005840">
    <property type="term" value="C:ribosome"/>
    <property type="evidence" value="ECO:0007669"/>
    <property type="project" value="InterPro"/>
</dbReference>
<dbReference type="GO" id="GO:0043022">
    <property type="term" value="F:ribosome binding"/>
    <property type="evidence" value="ECO:0007669"/>
    <property type="project" value="InterPro"/>
</dbReference>
<dbReference type="GO" id="GO:0042274">
    <property type="term" value="P:ribosomal small subunit biogenesis"/>
    <property type="evidence" value="ECO:0007669"/>
    <property type="project" value="UniProtKB-UniRule"/>
</dbReference>
<dbReference type="GO" id="GO:0006364">
    <property type="term" value="P:rRNA processing"/>
    <property type="evidence" value="ECO:0007669"/>
    <property type="project" value="UniProtKB-UniRule"/>
</dbReference>
<dbReference type="Gene3D" id="2.30.30.240">
    <property type="entry name" value="PRC-barrel domain"/>
    <property type="match status" value="1"/>
</dbReference>
<dbReference type="Gene3D" id="2.40.30.60">
    <property type="entry name" value="RimM"/>
    <property type="match status" value="1"/>
</dbReference>
<dbReference type="HAMAP" id="MF_00014">
    <property type="entry name" value="Ribosome_mat_RimM"/>
    <property type="match status" value="1"/>
</dbReference>
<dbReference type="InterPro" id="IPR011033">
    <property type="entry name" value="PRC_barrel-like_sf"/>
</dbReference>
<dbReference type="InterPro" id="IPR056792">
    <property type="entry name" value="PRC_RimM"/>
</dbReference>
<dbReference type="InterPro" id="IPR011961">
    <property type="entry name" value="RimM"/>
</dbReference>
<dbReference type="InterPro" id="IPR002676">
    <property type="entry name" value="RimM_N"/>
</dbReference>
<dbReference type="InterPro" id="IPR036976">
    <property type="entry name" value="RimM_N_sf"/>
</dbReference>
<dbReference type="InterPro" id="IPR009000">
    <property type="entry name" value="Transl_B-barrel_sf"/>
</dbReference>
<dbReference type="NCBIfam" id="TIGR02273">
    <property type="entry name" value="16S_RimM"/>
    <property type="match status" value="1"/>
</dbReference>
<dbReference type="PANTHER" id="PTHR33692">
    <property type="entry name" value="RIBOSOME MATURATION FACTOR RIMM"/>
    <property type="match status" value="1"/>
</dbReference>
<dbReference type="PANTHER" id="PTHR33692:SF1">
    <property type="entry name" value="RIBOSOME MATURATION FACTOR RIMM"/>
    <property type="match status" value="1"/>
</dbReference>
<dbReference type="Pfam" id="PF24986">
    <property type="entry name" value="PRC_RimM"/>
    <property type="match status" value="1"/>
</dbReference>
<dbReference type="Pfam" id="PF01782">
    <property type="entry name" value="RimM"/>
    <property type="match status" value="1"/>
</dbReference>
<dbReference type="SUPFAM" id="SSF50346">
    <property type="entry name" value="PRC-barrel domain"/>
    <property type="match status" value="1"/>
</dbReference>
<dbReference type="SUPFAM" id="SSF50447">
    <property type="entry name" value="Translation proteins"/>
    <property type="match status" value="1"/>
</dbReference>